<protein>
    <recommendedName>
        <fullName evidence="1">SsrA-binding protein</fullName>
    </recommendedName>
    <alternativeName>
        <fullName evidence="1">Small protein B</fullName>
    </alternativeName>
</protein>
<dbReference type="EMBL" id="CP000033">
    <property type="protein sequence ID" value="AAV42340.1"/>
    <property type="molecule type" value="Genomic_DNA"/>
</dbReference>
<dbReference type="RefSeq" id="WP_003550138.1">
    <property type="nucleotide sequence ID" value="NC_006814.3"/>
</dbReference>
<dbReference type="RefSeq" id="YP_193371.1">
    <property type="nucleotide sequence ID" value="NC_006814.3"/>
</dbReference>
<dbReference type="SMR" id="Q5FLT4"/>
<dbReference type="STRING" id="272621.LBA0450"/>
<dbReference type="GeneID" id="93290421"/>
<dbReference type="KEGG" id="lac:LBA0450"/>
<dbReference type="PATRIC" id="fig|272621.13.peg.434"/>
<dbReference type="eggNOG" id="COG0691">
    <property type="taxonomic scope" value="Bacteria"/>
</dbReference>
<dbReference type="HOGENOM" id="CLU_108953_0_0_9"/>
<dbReference type="OrthoDB" id="9805462at2"/>
<dbReference type="BioCyc" id="LACI272621:G1G49-475-MONOMER"/>
<dbReference type="Proteomes" id="UP000006381">
    <property type="component" value="Chromosome"/>
</dbReference>
<dbReference type="GO" id="GO:0005829">
    <property type="term" value="C:cytosol"/>
    <property type="evidence" value="ECO:0007669"/>
    <property type="project" value="TreeGrafter"/>
</dbReference>
<dbReference type="GO" id="GO:0003723">
    <property type="term" value="F:RNA binding"/>
    <property type="evidence" value="ECO:0007669"/>
    <property type="project" value="UniProtKB-UniRule"/>
</dbReference>
<dbReference type="GO" id="GO:0070929">
    <property type="term" value="P:trans-translation"/>
    <property type="evidence" value="ECO:0007669"/>
    <property type="project" value="UniProtKB-UniRule"/>
</dbReference>
<dbReference type="CDD" id="cd09294">
    <property type="entry name" value="SmpB"/>
    <property type="match status" value="1"/>
</dbReference>
<dbReference type="Gene3D" id="2.40.280.10">
    <property type="match status" value="1"/>
</dbReference>
<dbReference type="HAMAP" id="MF_00023">
    <property type="entry name" value="SmpB"/>
    <property type="match status" value="1"/>
</dbReference>
<dbReference type="InterPro" id="IPR023620">
    <property type="entry name" value="SmpB"/>
</dbReference>
<dbReference type="InterPro" id="IPR000037">
    <property type="entry name" value="SsrA-bd_prot"/>
</dbReference>
<dbReference type="InterPro" id="IPR020081">
    <property type="entry name" value="SsrA-bd_prot_CS"/>
</dbReference>
<dbReference type="NCBIfam" id="NF003843">
    <property type="entry name" value="PRK05422.1"/>
    <property type="match status" value="1"/>
</dbReference>
<dbReference type="NCBIfam" id="TIGR00086">
    <property type="entry name" value="smpB"/>
    <property type="match status" value="1"/>
</dbReference>
<dbReference type="PANTHER" id="PTHR30308:SF2">
    <property type="entry name" value="SSRA-BINDING PROTEIN"/>
    <property type="match status" value="1"/>
</dbReference>
<dbReference type="PANTHER" id="PTHR30308">
    <property type="entry name" value="TMRNA-BINDING COMPONENT OF TRANS-TRANSLATION TAGGING COMPLEX"/>
    <property type="match status" value="1"/>
</dbReference>
<dbReference type="Pfam" id="PF01668">
    <property type="entry name" value="SmpB"/>
    <property type="match status" value="1"/>
</dbReference>
<dbReference type="SUPFAM" id="SSF74982">
    <property type="entry name" value="Small protein B (SmpB)"/>
    <property type="match status" value="1"/>
</dbReference>
<dbReference type="PROSITE" id="PS01317">
    <property type="entry name" value="SSRP"/>
    <property type="match status" value="1"/>
</dbReference>
<organism>
    <name type="scientific">Lactobacillus acidophilus (strain ATCC 700396 / NCK56 / N2 / NCFM)</name>
    <dbReference type="NCBI Taxonomy" id="272621"/>
    <lineage>
        <taxon>Bacteria</taxon>
        <taxon>Bacillati</taxon>
        <taxon>Bacillota</taxon>
        <taxon>Bacilli</taxon>
        <taxon>Lactobacillales</taxon>
        <taxon>Lactobacillaceae</taxon>
        <taxon>Lactobacillus</taxon>
    </lineage>
</organism>
<name>SSRP_LACAC</name>
<comment type="function">
    <text evidence="1">Required for rescue of stalled ribosomes mediated by trans-translation. Binds to transfer-messenger RNA (tmRNA), required for stable association of tmRNA with ribosomes. tmRNA and SmpB together mimic tRNA shape, replacing the anticodon stem-loop with SmpB. tmRNA is encoded by the ssrA gene; the 2 termini fold to resemble tRNA(Ala) and it encodes a 'tag peptide', a short internal open reading frame. During trans-translation Ala-aminoacylated tmRNA acts like a tRNA, entering the A-site of stalled ribosomes, displacing the stalled mRNA. The ribosome then switches to translate the ORF on the tmRNA; the nascent peptide is terminated with the 'tag peptide' encoded by the tmRNA and targeted for degradation. The ribosome is freed to recommence translation, which seems to be the essential function of trans-translation.</text>
</comment>
<comment type="subcellular location">
    <subcellularLocation>
        <location evidence="1">Cytoplasm</location>
    </subcellularLocation>
    <text evidence="1">The tmRNA-SmpB complex associates with stalled 70S ribosomes.</text>
</comment>
<comment type="similarity">
    <text evidence="1">Belongs to the SmpB family.</text>
</comment>
<evidence type="ECO:0000255" key="1">
    <source>
        <dbReference type="HAMAP-Rule" id="MF_00023"/>
    </source>
</evidence>
<proteinExistence type="inferred from homology"/>
<keyword id="KW-0963">Cytoplasm</keyword>
<keyword id="KW-1185">Reference proteome</keyword>
<keyword id="KW-0694">RNA-binding</keyword>
<accession>Q5FLT4</accession>
<sequence length="151" mass="17694">MKEKEENLIAQNKKARHDYFIKETLEAGIALTGTEIKSVRARRINLRDGYVQIINGSAYLENVHISEYKQGNRYNHDPLRSRRLLLHKKEINRLAKVQAERGIAIIPLKVYLKHGFAKVLIGVGQGKKEYDKRQTIKERDQKREIRRKYGI</sequence>
<gene>
    <name evidence="1" type="primary">smpB</name>
    <name type="ordered locus">LBA0450</name>
</gene>
<reference key="1">
    <citation type="journal article" date="2005" name="Proc. Natl. Acad. Sci. U.S.A.">
        <title>Complete genome sequence of the probiotic lactic acid bacterium Lactobacillus acidophilus NCFM.</title>
        <authorList>
            <person name="Altermann E."/>
            <person name="Russell W.M."/>
            <person name="Azcarate-Peril M.A."/>
            <person name="Barrangou R."/>
            <person name="Buck B.L."/>
            <person name="McAuliffe O."/>
            <person name="Souther N."/>
            <person name="Dobson A."/>
            <person name="Duong T."/>
            <person name="Callanan M."/>
            <person name="Lick S."/>
            <person name="Hamrick A."/>
            <person name="Cano R."/>
            <person name="Klaenhammer T.R."/>
        </authorList>
    </citation>
    <scope>NUCLEOTIDE SEQUENCE [LARGE SCALE GENOMIC DNA]</scope>
    <source>
        <strain>ATCC 700396 / NCK56 / N2 / NCFM</strain>
    </source>
</reference>
<feature type="chain" id="PRO_0000102963" description="SsrA-binding protein">
    <location>
        <begin position="1"/>
        <end position="151"/>
    </location>
</feature>